<sequence length="438" mass="51143">MNFLGNPRSHTAAFLPVCWLLLNILKPGHCHSYDNRYAGDKVIRLIPKSEEEALALKNIYHQLKVDLWQPSSISYVSEGTITDVHISQNASRTLLAFLQETHIYYKVLIEDLQKAVENENSLQTQRNRRSLSEYNYEVYHSLEDIQSWLHHLNQTQPGLVRVFSIGRSYEGRPLFIMQLGRKSRAYKRAVWIDCGIHAREWIGPAFCQWFVREAILTYKTDPAMKKMLNHLYFYIMPVFNVDGYHFSWTHDRFWRKTRSRDSKFRCRGVDANRNWKVKWCDEGASAHPCDDTYCGPFPESEPEVKAVANFLRKHRKRIRAYLSFHAYAQMLLYPYSYKYATIPNFSCVEFAAHKAVKALRSVHGIRYRHGPASQTLYVSSGNSMDWAYKNGIPYAFAFELRDTGHFGFLLPEMLIKPTCTETMLAVKNITMHLLKKCP</sequence>
<gene>
    <name type="primary">Cpa6</name>
</gene>
<feature type="signal peptide" evidence="4">
    <location>
        <begin position="1"/>
        <end position="30"/>
    </location>
</feature>
<feature type="propeptide" id="PRO_0000004367" description="Activation peptide" evidence="1">
    <location>
        <begin position="31"/>
        <end position="129"/>
    </location>
</feature>
<feature type="chain" id="PRO_0000004368" description="Carboxypeptidase A6">
    <location>
        <begin position="130"/>
        <end position="438"/>
    </location>
</feature>
<feature type="domain" description="Peptidase M14" evidence="5">
    <location>
        <begin position="138"/>
        <end position="433"/>
    </location>
</feature>
<feature type="active site" description="Proton donor/acceptor" evidence="5">
    <location>
        <position position="399"/>
    </location>
</feature>
<feature type="binding site" evidence="2">
    <location>
        <begin position="197"/>
        <end position="200"/>
    </location>
    <ligand>
        <name>substrate</name>
    </ligand>
</feature>
<feature type="binding site" evidence="5">
    <location>
        <position position="197"/>
    </location>
    <ligand>
        <name>Zn(2+)</name>
        <dbReference type="ChEBI" id="CHEBI:29105"/>
        <note>catalytic</note>
    </ligand>
</feature>
<feature type="binding site" evidence="5">
    <location>
        <position position="200"/>
    </location>
    <ligand>
        <name>Zn(2+)</name>
        <dbReference type="ChEBI" id="CHEBI:29105"/>
        <note>catalytic</note>
    </ligand>
</feature>
<feature type="binding site" evidence="2">
    <location>
        <position position="255"/>
    </location>
    <ligand>
        <name>substrate</name>
    </ligand>
</feature>
<feature type="binding site" evidence="2">
    <location>
        <begin position="272"/>
        <end position="273"/>
    </location>
    <ligand>
        <name>substrate</name>
    </ligand>
</feature>
<feature type="binding site" evidence="5">
    <location>
        <position position="325"/>
    </location>
    <ligand>
        <name>Zn(2+)</name>
        <dbReference type="ChEBI" id="CHEBI:29105"/>
        <note>catalytic</note>
    </ligand>
</feature>
<feature type="binding site" evidence="2">
    <location>
        <begin position="326"/>
        <end position="327"/>
    </location>
    <ligand>
        <name>substrate</name>
    </ligand>
</feature>
<feature type="binding site" evidence="2">
    <location>
        <position position="377"/>
    </location>
    <ligand>
        <name>substrate</name>
    </ligand>
</feature>
<feature type="glycosylation site" description="N-linked (GlcNAc...) asparagine" evidence="4">
    <location>
        <position position="89"/>
    </location>
</feature>
<feature type="glycosylation site" description="N-linked (GlcNAc...) asparagine" evidence="4">
    <location>
        <position position="153"/>
    </location>
</feature>
<feature type="glycosylation site" description="N-linked (GlcNAc...) asparagine" evidence="4">
    <location>
        <position position="344"/>
    </location>
</feature>
<feature type="glycosylation site" description="N-linked (GlcNAc...) asparagine" evidence="4">
    <location>
        <position position="428"/>
    </location>
</feature>
<feature type="disulfide bond" evidence="3">
    <location>
        <begin position="266"/>
        <end position="289"/>
    </location>
</feature>
<feature type="splice variant" id="VSP_017081" description="In isoform 2." evidence="7">
    <location>
        <begin position="1"/>
        <end position="176"/>
    </location>
</feature>
<organism>
    <name type="scientific">Mus musculus</name>
    <name type="common">Mouse</name>
    <dbReference type="NCBI Taxonomy" id="10090"/>
    <lineage>
        <taxon>Eukaryota</taxon>
        <taxon>Metazoa</taxon>
        <taxon>Chordata</taxon>
        <taxon>Craniata</taxon>
        <taxon>Vertebrata</taxon>
        <taxon>Euteleostomi</taxon>
        <taxon>Mammalia</taxon>
        <taxon>Eutheria</taxon>
        <taxon>Euarchontoglires</taxon>
        <taxon>Glires</taxon>
        <taxon>Rodentia</taxon>
        <taxon>Myomorpha</taxon>
        <taxon>Muroidea</taxon>
        <taxon>Muridae</taxon>
        <taxon>Murinae</taxon>
        <taxon>Mus</taxon>
        <taxon>Mus</taxon>
    </lineage>
</organism>
<reference key="1">
    <citation type="journal article" date="2005" name="Brain Res. Mol. Brain Res.">
        <title>Identification and distribution of mouse carboxypeptidase A-6.</title>
        <authorList>
            <person name="Fontenele-Neto J.D."/>
            <person name="Kalinina E."/>
            <person name="Feng Y."/>
            <person name="Fricker L.D."/>
        </authorList>
    </citation>
    <scope>NUCLEOTIDE SEQUENCE [MRNA] (ISOFORM 1)</scope>
    <scope>TISSUE SPECIFICITY</scope>
    <source>
        <strain>C57BLKS/J</strain>
    </source>
</reference>
<reference key="2">
    <citation type="journal article" date="2005" name="Science">
        <title>The transcriptional landscape of the mammalian genome.</title>
        <authorList>
            <person name="Carninci P."/>
            <person name="Kasukawa T."/>
            <person name="Katayama S."/>
            <person name="Gough J."/>
            <person name="Frith M.C."/>
            <person name="Maeda N."/>
            <person name="Oyama R."/>
            <person name="Ravasi T."/>
            <person name="Lenhard B."/>
            <person name="Wells C."/>
            <person name="Kodzius R."/>
            <person name="Shimokawa K."/>
            <person name="Bajic V.B."/>
            <person name="Brenner S.E."/>
            <person name="Batalov S."/>
            <person name="Forrest A.R."/>
            <person name="Zavolan M."/>
            <person name="Davis M.J."/>
            <person name="Wilming L.G."/>
            <person name="Aidinis V."/>
            <person name="Allen J.E."/>
            <person name="Ambesi-Impiombato A."/>
            <person name="Apweiler R."/>
            <person name="Aturaliya R.N."/>
            <person name="Bailey T.L."/>
            <person name="Bansal M."/>
            <person name="Baxter L."/>
            <person name="Beisel K.W."/>
            <person name="Bersano T."/>
            <person name="Bono H."/>
            <person name="Chalk A.M."/>
            <person name="Chiu K.P."/>
            <person name="Choudhary V."/>
            <person name="Christoffels A."/>
            <person name="Clutterbuck D.R."/>
            <person name="Crowe M.L."/>
            <person name="Dalla E."/>
            <person name="Dalrymple B.P."/>
            <person name="de Bono B."/>
            <person name="Della Gatta G."/>
            <person name="di Bernardo D."/>
            <person name="Down T."/>
            <person name="Engstrom P."/>
            <person name="Fagiolini M."/>
            <person name="Faulkner G."/>
            <person name="Fletcher C.F."/>
            <person name="Fukushima T."/>
            <person name="Furuno M."/>
            <person name="Futaki S."/>
            <person name="Gariboldi M."/>
            <person name="Georgii-Hemming P."/>
            <person name="Gingeras T.R."/>
            <person name="Gojobori T."/>
            <person name="Green R.E."/>
            <person name="Gustincich S."/>
            <person name="Harbers M."/>
            <person name="Hayashi Y."/>
            <person name="Hensch T.K."/>
            <person name="Hirokawa N."/>
            <person name="Hill D."/>
            <person name="Huminiecki L."/>
            <person name="Iacono M."/>
            <person name="Ikeo K."/>
            <person name="Iwama A."/>
            <person name="Ishikawa T."/>
            <person name="Jakt M."/>
            <person name="Kanapin A."/>
            <person name="Katoh M."/>
            <person name="Kawasawa Y."/>
            <person name="Kelso J."/>
            <person name="Kitamura H."/>
            <person name="Kitano H."/>
            <person name="Kollias G."/>
            <person name="Krishnan S.P."/>
            <person name="Kruger A."/>
            <person name="Kummerfeld S.K."/>
            <person name="Kurochkin I.V."/>
            <person name="Lareau L.F."/>
            <person name="Lazarevic D."/>
            <person name="Lipovich L."/>
            <person name="Liu J."/>
            <person name="Liuni S."/>
            <person name="McWilliam S."/>
            <person name="Madan Babu M."/>
            <person name="Madera M."/>
            <person name="Marchionni L."/>
            <person name="Matsuda H."/>
            <person name="Matsuzawa S."/>
            <person name="Miki H."/>
            <person name="Mignone F."/>
            <person name="Miyake S."/>
            <person name="Morris K."/>
            <person name="Mottagui-Tabar S."/>
            <person name="Mulder N."/>
            <person name="Nakano N."/>
            <person name="Nakauchi H."/>
            <person name="Ng P."/>
            <person name="Nilsson R."/>
            <person name="Nishiguchi S."/>
            <person name="Nishikawa S."/>
            <person name="Nori F."/>
            <person name="Ohara O."/>
            <person name="Okazaki Y."/>
            <person name="Orlando V."/>
            <person name="Pang K.C."/>
            <person name="Pavan W.J."/>
            <person name="Pavesi G."/>
            <person name="Pesole G."/>
            <person name="Petrovsky N."/>
            <person name="Piazza S."/>
            <person name="Reed J."/>
            <person name="Reid J.F."/>
            <person name="Ring B.Z."/>
            <person name="Ringwald M."/>
            <person name="Rost B."/>
            <person name="Ruan Y."/>
            <person name="Salzberg S.L."/>
            <person name="Sandelin A."/>
            <person name="Schneider C."/>
            <person name="Schoenbach C."/>
            <person name="Sekiguchi K."/>
            <person name="Semple C.A."/>
            <person name="Seno S."/>
            <person name="Sessa L."/>
            <person name="Sheng Y."/>
            <person name="Shibata Y."/>
            <person name="Shimada H."/>
            <person name="Shimada K."/>
            <person name="Silva D."/>
            <person name="Sinclair B."/>
            <person name="Sperling S."/>
            <person name="Stupka E."/>
            <person name="Sugiura K."/>
            <person name="Sultana R."/>
            <person name="Takenaka Y."/>
            <person name="Taki K."/>
            <person name="Tammoja K."/>
            <person name="Tan S.L."/>
            <person name="Tang S."/>
            <person name="Taylor M.S."/>
            <person name="Tegner J."/>
            <person name="Teichmann S.A."/>
            <person name="Ueda H.R."/>
            <person name="van Nimwegen E."/>
            <person name="Verardo R."/>
            <person name="Wei C.L."/>
            <person name="Yagi K."/>
            <person name="Yamanishi H."/>
            <person name="Zabarovsky E."/>
            <person name="Zhu S."/>
            <person name="Zimmer A."/>
            <person name="Hide W."/>
            <person name="Bult C."/>
            <person name="Grimmond S.M."/>
            <person name="Teasdale R.D."/>
            <person name="Liu E.T."/>
            <person name="Brusic V."/>
            <person name="Quackenbush J."/>
            <person name="Wahlestedt C."/>
            <person name="Mattick J.S."/>
            <person name="Hume D.A."/>
            <person name="Kai C."/>
            <person name="Sasaki D."/>
            <person name="Tomaru Y."/>
            <person name="Fukuda S."/>
            <person name="Kanamori-Katayama M."/>
            <person name="Suzuki M."/>
            <person name="Aoki J."/>
            <person name="Arakawa T."/>
            <person name="Iida J."/>
            <person name="Imamura K."/>
            <person name="Itoh M."/>
            <person name="Kato T."/>
            <person name="Kawaji H."/>
            <person name="Kawagashira N."/>
            <person name="Kawashima T."/>
            <person name="Kojima M."/>
            <person name="Kondo S."/>
            <person name="Konno H."/>
            <person name="Nakano K."/>
            <person name="Ninomiya N."/>
            <person name="Nishio T."/>
            <person name="Okada M."/>
            <person name="Plessy C."/>
            <person name="Shibata K."/>
            <person name="Shiraki T."/>
            <person name="Suzuki S."/>
            <person name="Tagami M."/>
            <person name="Waki K."/>
            <person name="Watahiki A."/>
            <person name="Okamura-Oho Y."/>
            <person name="Suzuki H."/>
            <person name="Kawai J."/>
            <person name="Hayashizaki Y."/>
        </authorList>
    </citation>
    <scope>NUCLEOTIDE SEQUENCE [LARGE SCALE MRNA] (ISOFORM 2)</scope>
    <source>
        <strain>C57BL/6J</strain>
        <tissue>Colon</tissue>
    </source>
</reference>
<proteinExistence type="evidence at transcript level"/>
<dbReference type="EC" id="3.4.17.-"/>
<dbReference type="EMBL" id="AY773477">
    <property type="protein sequence ID" value="AAV40814.1"/>
    <property type="molecule type" value="mRNA"/>
</dbReference>
<dbReference type="EMBL" id="AK078883">
    <property type="protein sequence ID" value="BAC37442.1"/>
    <property type="molecule type" value="mRNA"/>
</dbReference>
<dbReference type="CCDS" id="CCDS14819.1">
    <molecule id="Q5U901-1"/>
</dbReference>
<dbReference type="RefSeq" id="NP_001276426.1">
    <molecule id="Q5U901-2"/>
    <property type="nucleotide sequence ID" value="NM_001289497.2"/>
</dbReference>
<dbReference type="RefSeq" id="NP_808502.2">
    <molecule id="Q5U901-1"/>
    <property type="nucleotide sequence ID" value="NM_177834.5"/>
</dbReference>
<dbReference type="SMR" id="Q5U901"/>
<dbReference type="FunCoup" id="Q5U901">
    <property type="interactions" value="68"/>
</dbReference>
<dbReference type="STRING" id="10090.ENSMUSP00000035435"/>
<dbReference type="MEROPS" id="M14.018"/>
<dbReference type="GlyCosmos" id="Q5U901">
    <property type="glycosylation" value="4 sites, No reported glycans"/>
</dbReference>
<dbReference type="GlyGen" id="Q5U901">
    <property type="glycosylation" value="4 sites"/>
</dbReference>
<dbReference type="PhosphoSitePlus" id="Q5U901"/>
<dbReference type="PaxDb" id="10090-ENSMUSP00000035435"/>
<dbReference type="ProteomicsDB" id="265347">
    <molecule id="Q5U901-1"/>
</dbReference>
<dbReference type="ProteomicsDB" id="265348">
    <molecule id="Q5U901-2"/>
</dbReference>
<dbReference type="Pumba" id="Q5U901"/>
<dbReference type="Antibodypedia" id="42507">
    <property type="antibodies" value="168 antibodies from 26 providers"/>
</dbReference>
<dbReference type="DNASU" id="329093"/>
<dbReference type="Ensembl" id="ENSMUST00000035577.7">
    <molecule id="Q5U901-1"/>
    <property type="protein sequence ID" value="ENSMUSP00000035435.7"/>
    <property type="gene ID" value="ENSMUSG00000042501.13"/>
</dbReference>
<dbReference type="GeneID" id="329093"/>
<dbReference type="KEGG" id="mmu:329093"/>
<dbReference type="UCSC" id="uc007ahq.2">
    <molecule id="Q5U901-1"/>
    <property type="organism name" value="mouse"/>
</dbReference>
<dbReference type="AGR" id="MGI:3045348"/>
<dbReference type="CTD" id="57094"/>
<dbReference type="MGI" id="MGI:3045348">
    <property type="gene designation" value="Cpa6"/>
</dbReference>
<dbReference type="VEuPathDB" id="HostDB:ENSMUSG00000042501"/>
<dbReference type="eggNOG" id="KOG2650">
    <property type="taxonomic scope" value="Eukaryota"/>
</dbReference>
<dbReference type="GeneTree" id="ENSGT00940000159307"/>
<dbReference type="HOGENOM" id="CLU_019326_0_3_1"/>
<dbReference type="InParanoid" id="Q5U901"/>
<dbReference type="OMA" id="HQHAREH"/>
<dbReference type="OrthoDB" id="3626597at2759"/>
<dbReference type="PhylomeDB" id="Q5U901"/>
<dbReference type="TreeFam" id="TF317197"/>
<dbReference type="BRENDA" id="3.4.17.1">
    <property type="organism ID" value="3474"/>
</dbReference>
<dbReference type="BioGRID-ORCS" id="329093">
    <property type="hits" value="5 hits in 80 CRISPR screens"/>
</dbReference>
<dbReference type="ChiTaRS" id="Cpa6">
    <property type="organism name" value="mouse"/>
</dbReference>
<dbReference type="PRO" id="PR:Q5U901"/>
<dbReference type="Proteomes" id="UP000000589">
    <property type="component" value="Chromosome 1"/>
</dbReference>
<dbReference type="RNAct" id="Q5U901">
    <property type="molecule type" value="protein"/>
</dbReference>
<dbReference type="Bgee" id="ENSMUSG00000042501">
    <property type="expression patterns" value="Expressed in olfactory bulb layer and 65 other cell types or tissues"/>
</dbReference>
<dbReference type="ExpressionAtlas" id="Q5U901">
    <property type="expression patterns" value="baseline and differential"/>
</dbReference>
<dbReference type="GO" id="GO:0005576">
    <property type="term" value="C:extracellular region"/>
    <property type="evidence" value="ECO:0007669"/>
    <property type="project" value="UniProtKB-KW"/>
</dbReference>
<dbReference type="GO" id="GO:0004181">
    <property type="term" value="F:metallocarboxypeptidase activity"/>
    <property type="evidence" value="ECO:0007669"/>
    <property type="project" value="InterPro"/>
</dbReference>
<dbReference type="GO" id="GO:0008270">
    <property type="term" value="F:zinc ion binding"/>
    <property type="evidence" value="ECO:0007669"/>
    <property type="project" value="InterPro"/>
</dbReference>
<dbReference type="GO" id="GO:0006508">
    <property type="term" value="P:proteolysis"/>
    <property type="evidence" value="ECO:0007669"/>
    <property type="project" value="UniProtKB-KW"/>
</dbReference>
<dbReference type="FunFam" id="3.30.70.340:FF:000004">
    <property type="entry name" value="Carboxypeptidase A6"/>
    <property type="match status" value="1"/>
</dbReference>
<dbReference type="FunFam" id="3.40.630.10:FF:000001">
    <property type="entry name" value="Carboxypeptidase B"/>
    <property type="match status" value="1"/>
</dbReference>
<dbReference type="Gene3D" id="3.30.70.340">
    <property type="entry name" value="Metallocarboxypeptidase-like"/>
    <property type="match status" value="1"/>
</dbReference>
<dbReference type="Gene3D" id="3.40.630.10">
    <property type="entry name" value="Zn peptidases"/>
    <property type="match status" value="1"/>
</dbReference>
<dbReference type="InterPro" id="IPR036990">
    <property type="entry name" value="M14A-like_propep"/>
</dbReference>
<dbReference type="InterPro" id="IPR003146">
    <property type="entry name" value="M14A_act_pep"/>
</dbReference>
<dbReference type="InterPro" id="IPR000834">
    <property type="entry name" value="Peptidase_M14"/>
</dbReference>
<dbReference type="PANTHER" id="PTHR11705:SF18">
    <property type="entry name" value="CARBOXYPEPTIDASE A6"/>
    <property type="match status" value="1"/>
</dbReference>
<dbReference type="PANTHER" id="PTHR11705">
    <property type="entry name" value="PROTEASE FAMILY M14 CARBOXYPEPTIDASE A,B"/>
    <property type="match status" value="1"/>
</dbReference>
<dbReference type="Pfam" id="PF00246">
    <property type="entry name" value="Peptidase_M14"/>
    <property type="match status" value="1"/>
</dbReference>
<dbReference type="Pfam" id="PF02244">
    <property type="entry name" value="Propep_M14"/>
    <property type="match status" value="1"/>
</dbReference>
<dbReference type="PRINTS" id="PR00765">
    <property type="entry name" value="CRBOXYPTASEA"/>
</dbReference>
<dbReference type="SMART" id="SM00631">
    <property type="entry name" value="Zn_pept"/>
    <property type="match status" value="1"/>
</dbReference>
<dbReference type="SUPFAM" id="SSF54897">
    <property type="entry name" value="Protease propeptides/inhibitors"/>
    <property type="match status" value="1"/>
</dbReference>
<dbReference type="SUPFAM" id="SSF53187">
    <property type="entry name" value="Zn-dependent exopeptidases"/>
    <property type="match status" value="1"/>
</dbReference>
<dbReference type="PROSITE" id="PS00133">
    <property type="entry name" value="CARBOXYPEPT_ZN_2"/>
    <property type="match status" value="1"/>
</dbReference>
<dbReference type="PROSITE" id="PS52035">
    <property type="entry name" value="PEPTIDASE_M14"/>
    <property type="match status" value="1"/>
</dbReference>
<protein>
    <recommendedName>
        <fullName>Carboxypeptidase A6</fullName>
        <ecNumber>3.4.17.-</ecNumber>
    </recommendedName>
</protein>
<name>CBPA6_MOUSE</name>
<keyword id="KW-0025">Alternative splicing</keyword>
<keyword id="KW-0121">Carboxypeptidase</keyword>
<keyword id="KW-0165">Cleavage on pair of basic residues</keyword>
<keyword id="KW-1015">Disulfide bond</keyword>
<keyword id="KW-0272">Extracellular matrix</keyword>
<keyword id="KW-0325">Glycoprotein</keyword>
<keyword id="KW-0378">Hydrolase</keyword>
<keyword id="KW-0479">Metal-binding</keyword>
<keyword id="KW-0482">Metalloprotease</keyword>
<keyword id="KW-0645">Protease</keyword>
<keyword id="KW-1185">Reference proteome</keyword>
<keyword id="KW-0964">Secreted</keyword>
<keyword id="KW-0732">Signal</keyword>
<keyword id="KW-0862">Zinc</keyword>
<keyword id="KW-0865">Zymogen</keyword>
<accession>Q5U901</accession>
<accession>Q8BVD0</accession>
<evidence type="ECO:0000250" key="1"/>
<evidence type="ECO:0000250" key="2">
    <source>
        <dbReference type="UniProtKB" id="P00730"/>
    </source>
</evidence>
<evidence type="ECO:0000250" key="3">
    <source>
        <dbReference type="UniProtKB" id="Q96IY4"/>
    </source>
</evidence>
<evidence type="ECO:0000255" key="4"/>
<evidence type="ECO:0000255" key="5">
    <source>
        <dbReference type="PROSITE-ProRule" id="PRU01379"/>
    </source>
</evidence>
<evidence type="ECO:0000269" key="6">
    <source>
    </source>
</evidence>
<evidence type="ECO:0000303" key="7">
    <source>
    </source>
</evidence>
<evidence type="ECO:0000305" key="8"/>
<comment type="function">
    <text evidence="1">May be involved in the proteolytic inactivation of enkephalins and neurotensin in some brain areas. May convert inactive angiotensin I into the biologically active angiotensin II. Releases a C-terminal amino acid, with preference for large hydrophobic C-terminal amino acids and shows only very weak activity toward small amino acids and histidine.</text>
</comment>
<comment type="cofactor">
    <cofactor evidence="2">
        <name>Zn(2+)</name>
        <dbReference type="ChEBI" id="CHEBI:29105"/>
    </cofactor>
    <text evidence="2">Binds 1 zinc ion per subunit.</text>
</comment>
<comment type="subcellular location">
    <subcellularLocation>
        <location evidence="1">Secreted</location>
        <location evidence="1">Extracellular space</location>
        <location evidence="1">Extracellular matrix</location>
    </subcellularLocation>
</comment>
<comment type="alternative products">
    <event type="alternative splicing"/>
    <isoform>
        <id>Q5U901-1</id>
        <name>1</name>
        <sequence type="displayed"/>
    </isoform>
    <isoform>
        <id>Q5U901-2</id>
        <name>2</name>
        <sequence type="described" ref="VSP_017081"/>
    </isoform>
</comment>
<comment type="tissue specificity">
    <text evidence="6">In brain, highly expressed in the olfactory bulb with lower levels in other regions including cerebral cortex, hippocampus, hypothalamus, striatum and medulla. Within the olfactory bulb, highest levels occur in the mitral and granular layers with lower levels in the internal and external plexiform layers. Moderate levels are found in the epididymis with low levels in colon and spleen. Not detected in adrenal, liver, lung, ovary or testis. At embryonic day 14.5, enriched in eye, ear, osteoblasts, stomach, skin, dorsal root ganglia and throughout the CNS.</text>
</comment>
<comment type="similarity">
    <text evidence="8">Belongs to the peptidase M14 family.</text>
</comment>